<accession>P0A5X3</accession>
<accession>A0A1R3XWA5</accession>
<accession>P95065</accession>
<accession>X2BFS2</accession>
<reference key="1">
    <citation type="journal article" date="2003" name="Proc. Natl. Acad. Sci. U.S.A.">
        <title>The complete genome sequence of Mycobacterium bovis.</title>
        <authorList>
            <person name="Garnier T."/>
            <person name="Eiglmeier K."/>
            <person name="Camus J.-C."/>
            <person name="Medina N."/>
            <person name="Mansoor H."/>
            <person name="Pryor M."/>
            <person name="Duthoy S."/>
            <person name="Grondin S."/>
            <person name="Lacroix C."/>
            <person name="Monsempe C."/>
            <person name="Simon S."/>
            <person name="Harris B."/>
            <person name="Atkin R."/>
            <person name="Doggett J."/>
            <person name="Mayes R."/>
            <person name="Keating L."/>
            <person name="Wheeler P.R."/>
            <person name="Parkhill J."/>
            <person name="Barrell B.G."/>
            <person name="Cole S.T."/>
            <person name="Gordon S.V."/>
            <person name="Hewinson R.G."/>
        </authorList>
    </citation>
    <scope>NUCLEOTIDE SEQUENCE [LARGE SCALE GENOMIC DNA]</scope>
    <source>
        <strain>ATCC BAA-935 / AF2122/97</strain>
    </source>
</reference>
<reference key="2">
    <citation type="journal article" date="2017" name="Genome Announc.">
        <title>Updated reference genome sequence and annotation of Mycobacterium bovis AF2122/97.</title>
        <authorList>
            <person name="Malone K.M."/>
            <person name="Farrell D."/>
            <person name="Stuber T.P."/>
            <person name="Schubert O.T."/>
            <person name="Aebersold R."/>
            <person name="Robbe-Austerman S."/>
            <person name="Gordon S.V."/>
        </authorList>
    </citation>
    <scope>NUCLEOTIDE SEQUENCE [LARGE SCALE GENOMIC DNA]</scope>
    <scope>GENOME REANNOTATION</scope>
    <source>
        <strain>ATCC BAA-935 / AF2122/97</strain>
    </source>
</reference>
<gene>
    <name evidence="1" type="primary">rpsZ</name>
    <name evidence="1" type="synonym">rpsN1</name>
    <name type="ordered locus">BQ2027_MB0738</name>
</gene>
<feature type="chain" id="PRO_0000130911" description="Small ribosomal subunit protein uS14B">
    <location>
        <begin position="1"/>
        <end position="61"/>
    </location>
</feature>
<feature type="binding site" evidence="1">
    <location>
        <position position="24"/>
    </location>
    <ligand>
        <name>Zn(2+)</name>
        <dbReference type="ChEBI" id="CHEBI:29105"/>
    </ligand>
</feature>
<feature type="binding site" evidence="1">
    <location>
        <position position="27"/>
    </location>
    <ligand>
        <name>Zn(2+)</name>
        <dbReference type="ChEBI" id="CHEBI:29105"/>
    </ligand>
</feature>
<feature type="binding site" evidence="1">
    <location>
        <position position="40"/>
    </location>
    <ligand>
        <name>Zn(2+)</name>
        <dbReference type="ChEBI" id="CHEBI:29105"/>
    </ligand>
</feature>
<feature type="binding site" evidence="1">
    <location>
        <position position="43"/>
    </location>
    <ligand>
        <name>Zn(2+)</name>
        <dbReference type="ChEBI" id="CHEBI:29105"/>
    </ligand>
</feature>
<keyword id="KW-0479">Metal-binding</keyword>
<keyword id="KW-1185">Reference proteome</keyword>
<keyword id="KW-0687">Ribonucleoprotein</keyword>
<keyword id="KW-0689">Ribosomal protein</keyword>
<keyword id="KW-0694">RNA-binding</keyword>
<keyword id="KW-0699">rRNA-binding</keyword>
<keyword id="KW-0862">Zinc</keyword>
<sequence length="61" mass="6825">MAKKALVNKAAGKPRFAVRAYTRCSKCGRPRAVYRKFGLCRICLREMAHAGELPGVQKSSW</sequence>
<comment type="function">
    <text evidence="1">Binds 16S rRNA, required for the assembly of 30S particles and may also be responsible for determining the conformation of the 16S rRNA at the A site.</text>
</comment>
<comment type="cofactor">
    <cofactor evidence="1">
        <name>Zn(2+)</name>
        <dbReference type="ChEBI" id="CHEBI:29105"/>
    </cofactor>
    <text evidence="1">Binds 1 zinc ion per subunit.</text>
</comment>
<comment type="subunit">
    <text evidence="1">Part of the 30S ribosomal subunit. Contacts proteins S3 and S10.</text>
</comment>
<comment type="similarity">
    <text evidence="1">Belongs to the universal ribosomal protein uS14 family. Zinc-binding uS14 subfamily.</text>
</comment>
<organism>
    <name type="scientific">Mycobacterium bovis (strain ATCC BAA-935 / AF2122/97)</name>
    <dbReference type="NCBI Taxonomy" id="233413"/>
    <lineage>
        <taxon>Bacteria</taxon>
        <taxon>Bacillati</taxon>
        <taxon>Actinomycetota</taxon>
        <taxon>Actinomycetes</taxon>
        <taxon>Mycobacteriales</taxon>
        <taxon>Mycobacteriaceae</taxon>
        <taxon>Mycobacterium</taxon>
        <taxon>Mycobacterium tuberculosis complex</taxon>
    </lineage>
</organism>
<proteinExistence type="inferred from homology"/>
<protein>
    <recommendedName>
        <fullName evidence="1">Small ribosomal subunit protein uS14B</fullName>
    </recommendedName>
    <alternativeName>
        <fullName evidence="2">30S ribosomal protein S14 type Z</fullName>
    </alternativeName>
</protein>
<evidence type="ECO:0000255" key="1">
    <source>
        <dbReference type="HAMAP-Rule" id="MF_01364"/>
    </source>
</evidence>
<evidence type="ECO:0000305" key="2"/>
<name>RS14Z_MYCBO</name>
<dbReference type="EMBL" id="LT708304">
    <property type="protein sequence ID" value="SIT99337.1"/>
    <property type="molecule type" value="Genomic_DNA"/>
</dbReference>
<dbReference type="RefSeq" id="NP_854396.1">
    <property type="nucleotide sequence ID" value="NC_002945.3"/>
</dbReference>
<dbReference type="RefSeq" id="WP_003403667.1">
    <property type="nucleotide sequence ID" value="NC_002945.4"/>
</dbReference>
<dbReference type="SMR" id="P0A5X3"/>
<dbReference type="KEGG" id="mbo:BQ2027_MB0738"/>
<dbReference type="PATRIC" id="fig|233413.5.peg.805"/>
<dbReference type="Proteomes" id="UP000001419">
    <property type="component" value="Chromosome"/>
</dbReference>
<dbReference type="GO" id="GO:0005737">
    <property type="term" value="C:cytoplasm"/>
    <property type="evidence" value="ECO:0007669"/>
    <property type="project" value="UniProtKB-ARBA"/>
</dbReference>
<dbReference type="GO" id="GO:0015935">
    <property type="term" value="C:small ribosomal subunit"/>
    <property type="evidence" value="ECO:0007669"/>
    <property type="project" value="TreeGrafter"/>
</dbReference>
<dbReference type="GO" id="GO:0019843">
    <property type="term" value="F:rRNA binding"/>
    <property type="evidence" value="ECO:0007669"/>
    <property type="project" value="UniProtKB-UniRule"/>
</dbReference>
<dbReference type="GO" id="GO:0003735">
    <property type="term" value="F:structural constituent of ribosome"/>
    <property type="evidence" value="ECO:0007669"/>
    <property type="project" value="InterPro"/>
</dbReference>
<dbReference type="GO" id="GO:0008270">
    <property type="term" value="F:zinc ion binding"/>
    <property type="evidence" value="ECO:0007669"/>
    <property type="project" value="UniProtKB-UniRule"/>
</dbReference>
<dbReference type="GO" id="GO:0006412">
    <property type="term" value="P:translation"/>
    <property type="evidence" value="ECO:0007669"/>
    <property type="project" value="UniProtKB-UniRule"/>
</dbReference>
<dbReference type="FunFam" id="4.10.830.10:FF:000001">
    <property type="entry name" value="30S ribosomal protein S14 type Z"/>
    <property type="match status" value="1"/>
</dbReference>
<dbReference type="Gene3D" id="4.10.830.10">
    <property type="entry name" value="30s Ribosomal Protein S14, Chain N"/>
    <property type="match status" value="1"/>
</dbReference>
<dbReference type="HAMAP" id="MF_01364_B">
    <property type="entry name" value="Ribosomal_uS14_2_B"/>
    <property type="match status" value="1"/>
</dbReference>
<dbReference type="InterPro" id="IPR001209">
    <property type="entry name" value="Ribosomal_uS14"/>
</dbReference>
<dbReference type="InterPro" id="IPR023053">
    <property type="entry name" value="Ribosomal_uS14_bact"/>
</dbReference>
<dbReference type="InterPro" id="IPR018271">
    <property type="entry name" value="Ribosomal_uS14_CS"/>
</dbReference>
<dbReference type="InterPro" id="IPR043140">
    <property type="entry name" value="Ribosomal_uS14_sf"/>
</dbReference>
<dbReference type="NCBIfam" id="NF005974">
    <property type="entry name" value="PRK08061.1"/>
    <property type="match status" value="1"/>
</dbReference>
<dbReference type="PANTHER" id="PTHR19836">
    <property type="entry name" value="30S RIBOSOMAL PROTEIN S14"/>
    <property type="match status" value="1"/>
</dbReference>
<dbReference type="PANTHER" id="PTHR19836:SF19">
    <property type="entry name" value="SMALL RIBOSOMAL SUBUNIT PROTEIN US14M"/>
    <property type="match status" value="1"/>
</dbReference>
<dbReference type="Pfam" id="PF00253">
    <property type="entry name" value="Ribosomal_S14"/>
    <property type="match status" value="1"/>
</dbReference>
<dbReference type="SUPFAM" id="SSF57716">
    <property type="entry name" value="Glucocorticoid receptor-like (DNA-binding domain)"/>
    <property type="match status" value="1"/>
</dbReference>
<dbReference type="PROSITE" id="PS00527">
    <property type="entry name" value="RIBOSOMAL_S14"/>
    <property type="match status" value="1"/>
</dbReference>